<dbReference type="EMBL" id="CP001087">
    <property type="protein sequence ID" value="ACN13518.1"/>
    <property type="molecule type" value="Genomic_DNA"/>
</dbReference>
<dbReference type="RefSeq" id="WP_012662767.1">
    <property type="nucleotide sequence ID" value="NC_012108.1"/>
</dbReference>
<dbReference type="SMR" id="C0QGP3"/>
<dbReference type="STRING" id="177437.HRM2_04000"/>
<dbReference type="KEGG" id="dat:HRM2_04000"/>
<dbReference type="eggNOG" id="COG0217">
    <property type="taxonomic scope" value="Bacteria"/>
</dbReference>
<dbReference type="HOGENOM" id="CLU_062974_2_2_7"/>
<dbReference type="OrthoDB" id="9781053at2"/>
<dbReference type="Proteomes" id="UP000000442">
    <property type="component" value="Chromosome"/>
</dbReference>
<dbReference type="GO" id="GO:0005829">
    <property type="term" value="C:cytosol"/>
    <property type="evidence" value="ECO:0007669"/>
    <property type="project" value="TreeGrafter"/>
</dbReference>
<dbReference type="GO" id="GO:0003677">
    <property type="term" value="F:DNA binding"/>
    <property type="evidence" value="ECO:0007669"/>
    <property type="project" value="UniProtKB-UniRule"/>
</dbReference>
<dbReference type="GO" id="GO:0006355">
    <property type="term" value="P:regulation of DNA-templated transcription"/>
    <property type="evidence" value="ECO:0007669"/>
    <property type="project" value="UniProtKB-UniRule"/>
</dbReference>
<dbReference type="FunFam" id="1.10.10.200:FF:000002">
    <property type="entry name" value="Probable transcriptional regulatory protein CLM62_37755"/>
    <property type="match status" value="1"/>
</dbReference>
<dbReference type="FunFam" id="3.30.70.980:FF:000002">
    <property type="entry name" value="Probable transcriptional regulatory protein YebC"/>
    <property type="match status" value="1"/>
</dbReference>
<dbReference type="Gene3D" id="1.10.10.200">
    <property type="match status" value="1"/>
</dbReference>
<dbReference type="Gene3D" id="3.30.70.980">
    <property type="match status" value="2"/>
</dbReference>
<dbReference type="HAMAP" id="MF_00693">
    <property type="entry name" value="Transcrip_reg_TACO1"/>
    <property type="match status" value="1"/>
</dbReference>
<dbReference type="InterPro" id="IPR017856">
    <property type="entry name" value="Integrase-like_N"/>
</dbReference>
<dbReference type="InterPro" id="IPR048300">
    <property type="entry name" value="TACO1_YebC-like_2nd/3rd_dom"/>
</dbReference>
<dbReference type="InterPro" id="IPR049083">
    <property type="entry name" value="TACO1_YebC_N"/>
</dbReference>
<dbReference type="InterPro" id="IPR002876">
    <property type="entry name" value="Transcrip_reg_TACO1-like"/>
</dbReference>
<dbReference type="InterPro" id="IPR026564">
    <property type="entry name" value="Transcrip_reg_TACO1-like_dom3"/>
</dbReference>
<dbReference type="InterPro" id="IPR029072">
    <property type="entry name" value="YebC-like"/>
</dbReference>
<dbReference type="NCBIfam" id="NF001030">
    <property type="entry name" value="PRK00110.1"/>
    <property type="match status" value="1"/>
</dbReference>
<dbReference type="NCBIfam" id="NF009044">
    <property type="entry name" value="PRK12378.1"/>
    <property type="match status" value="1"/>
</dbReference>
<dbReference type="NCBIfam" id="TIGR01033">
    <property type="entry name" value="YebC/PmpR family DNA-binding transcriptional regulator"/>
    <property type="match status" value="1"/>
</dbReference>
<dbReference type="PANTHER" id="PTHR12532:SF6">
    <property type="entry name" value="TRANSCRIPTIONAL REGULATORY PROTEIN YEBC-RELATED"/>
    <property type="match status" value="1"/>
</dbReference>
<dbReference type="PANTHER" id="PTHR12532">
    <property type="entry name" value="TRANSLATIONAL ACTIVATOR OF CYTOCHROME C OXIDASE 1"/>
    <property type="match status" value="1"/>
</dbReference>
<dbReference type="Pfam" id="PF20772">
    <property type="entry name" value="TACO1_YebC_N"/>
    <property type="match status" value="1"/>
</dbReference>
<dbReference type="Pfam" id="PF01709">
    <property type="entry name" value="Transcrip_reg"/>
    <property type="match status" value="1"/>
</dbReference>
<dbReference type="SUPFAM" id="SSF75625">
    <property type="entry name" value="YebC-like"/>
    <property type="match status" value="1"/>
</dbReference>
<reference key="1">
    <citation type="journal article" date="2009" name="Environ. Microbiol.">
        <title>Genome sequence of Desulfobacterium autotrophicum HRM2, a marine sulfate reducer oxidizing organic carbon completely to carbon dioxide.</title>
        <authorList>
            <person name="Strittmatter A.W."/>
            <person name="Liesegang H."/>
            <person name="Rabus R."/>
            <person name="Decker I."/>
            <person name="Amann J."/>
            <person name="Andres S."/>
            <person name="Henne A."/>
            <person name="Fricke W.F."/>
            <person name="Martinez-Arias R."/>
            <person name="Bartels D."/>
            <person name="Goesmann A."/>
            <person name="Krause L."/>
            <person name="Puehler A."/>
            <person name="Klenk H.P."/>
            <person name="Richter M."/>
            <person name="Schuler M."/>
            <person name="Gloeckner F.O."/>
            <person name="Meyerdierks A."/>
            <person name="Gottschalk G."/>
            <person name="Amann R."/>
        </authorList>
    </citation>
    <scope>NUCLEOTIDE SEQUENCE [LARGE SCALE GENOMIC DNA]</scope>
    <source>
        <strain>ATCC 43914 / DSM 3382 / VKM B-1955 / HRM2</strain>
    </source>
</reference>
<proteinExistence type="inferred from homology"/>
<gene>
    <name type="ordered locus">HRM2_04000</name>
</gene>
<feature type="chain" id="PRO_1000212604" description="Probable transcriptional regulatory protein HRM2_04000">
    <location>
        <begin position="1"/>
        <end position="247"/>
    </location>
</feature>
<protein>
    <recommendedName>
        <fullName evidence="1">Probable transcriptional regulatory protein HRM2_04000</fullName>
    </recommendedName>
</protein>
<keyword id="KW-0963">Cytoplasm</keyword>
<keyword id="KW-0238">DNA-binding</keyword>
<keyword id="KW-1185">Reference proteome</keyword>
<keyword id="KW-0804">Transcription</keyword>
<keyword id="KW-0805">Transcription regulation</keyword>
<comment type="subcellular location">
    <subcellularLocation>
        <location evidence="1">Cytoplasm</location>
    </subcellularLocation>
</comment>
<comment type="similarity">
    <text evidence="1">Belongs to the TACO1 family.</text>
</comment>
<organism>
    <name type="scientific">Desulforapulum autotrophicum (strain ATCC 43914 / DSM 3382 / VKM B-1955 / HRM2)</name>
    <name type="common">Desulfobacterium autotrophicum</name>
    <dbReference type="NCBI Taxonomy" id="177437"/>
    <lineage>
        <taxon>Bacteria</taxon>
        <taxon>Pseudomonadati</taxon>
        <taxon>Thermodesulfobacteriota</taxon>
        <taxon>Desulfobacteria</taxon>
        <taxon>Desulfobacterales</taxon>
        <taxon>Desulfobacteraceae</taxon>
        <taxon>Desulforapulum</taxon>
    </lineage>
</organism>
<accession>C0QGP3</accession>
<evidence type="ECO:0000255" key="1">
    <source>
        <dbReference type="HAMAP-Rule" id="MF_00693"/>
    </source>
</evidence>
<sequence length="247" mass="26817">MSGHSKWSTIKHKKGAADAKRGKIFTKLIKEITVAARMGGGDIDSNPRLRGAVAAAKAQNMPKDNLERAIKKGTGDLEGVDYEEILYEGYGPGGVAILVECLTDNKNRTIADVRYIFSKAGGNIGTDGCVAWMFDKKGLITISKEESDEDTLMEVGLEAGAEDVTDEGDCFEIITDPADFDAVKGAVEAAGIKIEMAEVTMIPQTQTRLEGKEAEQMVRFMDALDDCDDIQKFYSNADIPDEVYDAM</sequence>
<name>Y400_DESAH</name>